<comment type="similarity">
    <text evidence="1">Belongs to the universal ribosomal protein uS2 family.</text>
</comment>
<organism>
    <name type="scientific">Trichodesmium erythraeum (strain IMS101)</name>
    <dbReference type="NCBI Taxonomy" id="203124"/>
    <lineage>
        <taxon>Bacteria</taxon>
        <taxon>Bacillati</taxon>
        <taxon>Cyanobacteriota</taxon>
        <taxon>Cyanophyceae</taxon>
        <taxon>Oscillatoriophycideae</taxon>
        <taxon>Oscillatoriales</taxon>
        <taxon>Microcoleaceae</taxon>
        <taxon>Trichodesmium</taxon>
    </lineage>
</organism>
<keyword id="KW-0687">Ribonucleoprotein</keyword>
<keyword id="KW-0689">Ribosomal protein</keyword>
<gene>
    <name evidence="1" type="primary">rpsB</name>
    <name evidence="1" type="synonym">rps2</name>
    <name type="ordered locus">Tery_1161</name>
</gene>
<sequence>MPVVSLAQLLESGVHFGHQTRRWNPRMSQYIFTERNGVHIIDLVQTAQLMDEAYNYIRTASEQGKKFLFVGTKRQAAGIIAQEATRCGGYYINQRWLGGMLTNWTTIKTRVERLKDLERREESKALDLLPKKEASVLRREMAKLQKYLGGIKNMRRLPDGVIMVDQRREYNAVQECQKLNIPIVSLLDTNCDPTQVDIPIPANDDAIRSIKLIVGKLADAIYEGRHGQLEADYEDYYEDYEEYEDDYEGAEGDLDLDSANEEESLEDNNEEE</sequence>
<accession>Q116Q2</accession>
<proteinExistence type="inferred from homology"/>
<reference key="1">
    <citation type="journal article" date="2015" name="Proc. Natl. Acad. Sci. U.S.A.">
        <title>Trichodesmium genome maintains abundant, widespread noncoding DNA in situ, despite oligotrophic lifestyle.</title>
        <authorList>
            <person name="Walworth N."/>
            <person name="Pfreundt U."/>
            <person name="Nelson W.C."/>
            <person name="Mincer T."/>
            <person name="Heidelberg J.F."/>
            <person name="Fu F."/>
            <person name="Waterbury J.B."/>
            <person name="Glavina del Rio T."/>
            <person name="Goodwin L."/>
            <person name="Kyrpides N.C."/>
            <person name="Land M.L."/>
            <person name="Woyke T."/>
            <person name="Hutchins D.A."/>
            <person name="Hess W.R."/>
            <person name="Webb E.A."/>
        </authorList>
    </citation>
    <scope>NUCLEOTIDE SEQUENCE [LARGE SCALE GENOMIC DNA]</scope>
    <source>
        <strain>IMS101</strain>
    </source>
</reference>
<feature type="chain" id="PRO_1000004110" description="Small ribosomal subunit protein uS2">
    <location>
        <begin position="1"/>
        <end position="272"/>
    </location>
</feature>
<feature type="region of interest" description="Disordered" evidence="2">
    <location>
        <begin position="244"/>
        <end position="272"/>
    </location>
</feature>
<dbReference type="EMBL" id="CP000393">
    <property type="protein sequence ID" value="ABG50522.1"/>
    <property type="molecule type" value="Genomic_DNA"/>
</dbReference>
<dbReference type="RefSeq" id="WP_011610908.1">
    <property type="nucleotide sequence ID" value="NC_008312.1"/>
</dbReference>
<dbReference type="SMR" id="Q116Q2"/>
<dbReference type="STRING" id="203124.Tery_1161"/>
<dbReference type="KEGG" id="ter:Tery_1161"/>
<dbReference type="eggNOG" id="COG0052">
    <property type="taxonomic scope" value="Bacteria"/>
</dbReference>
<dbReference type="HOGENOM" id="CLU_040318_1_3_3"/>
<dbReference type="OrthoDB" id="9808036at2"/>
<dbReference type="GO" id="GO:0022627">
    <property type="term" value="C:cytosolic small ribosomal subunit"/>
    <property type="evidence" value="ECO:0007669"/>
    <property type="project" value="TreeGrafter"/>
</dbReference>
<dbReference type="GO" id="GO:0003735">
    <property type="term" value="F:structural constituent of ribosome"/>
    <property type="evidence" value="ECO:0007669"/>
    <property type="project" value="InterPro"/>
</dbReference>
<dbReference type="GO" id="GO:0006412">
    <property type="term" value="P:translation"/>
    <property type="evidence" value="ECO:0007669"/>
    <property type="project" value="UniProtKB-UniRule"/>
</dbReference>
<dbReference type="CDD" id="cd01425">
    <property type="entry name" value="RPS2"/>
    <property type="match status" value="1"/>
</dbReference>
<dbReference type="FunFam" id="1.10.287.610:FF:000001">
    <property type="entry name" value="30S ribosomal protein S2"/>
    <property type="match status" value="1"/>
</dbReference>
<dbReference type="Gene3D" id="3.40.50.10490">
    <property type="entry name" value="Glucose-6-phosphate isomerase like protein, domain 1"/>
    <property type="match status" value="1"/>
</dbReference>
<dbReference type="Gene3D" id="1.10.287.610">
    <property type="entry name" value="Helix hairpin bin"/>
    <property type="match status" value="1"/>
</dbReference>
<dbReference type="HAMAP" id="MF_00291_B">
    <property type="entry name" value="Ribosomal_uS2_B"/>
    <property type="match status" value="1"/>
</dbReference>
<dbReference type="InterPro" id="IPR001865">
    <property type="entry name" value="Ribosomal_uS2"/>
</dbReference>
<dbReference type="InterPro" id="IPR005706">
    <property type="entry name" value="Ribosomal_uS2_bac/mit/plastid"/>
</dbReference>
<dbReference type="InterPro" id="IPR018130">
    <property type="entry name" value="Ribosomal_uS2_CS"/>
</dbReference>
<dbReference type="InterPro" id="IPR023591">
    <property type="entry name" value="Ribosomal_uS2_flav_dom_sf"/>
</dbReference>
<dbReference type="NCBIfam" id="TIGR01011">
    <property type="entry name" value="rpsB_bact"/>
    <property type="match status" value="1"/>
</dbReference>
<dbReference type="PANTHER" id="PTHR12534">
    <property type="entry name" value="30S RIBOSOMAL PROTEIN S2 PROKARYOTIC AND ORGANELLAR"/>
    <property type="match status" value="1"/>
</dbReference>
<dbReference type="PANTHER" id="PTHR12534:SF0">
    <property type="entry name" value="SMALL RIBOSOMAL SUBUNIT PROTEIN US2M"/>
    <property type="match status" value="1"/>
</dbReference>
<dbReference type="Pfam" id="PF00318">
    <property type="entry name" value="Ribosomal_S2"/>
    <property type="match status" value="1"/>
</dbReference>
<dbReference type="PRINTS" id="PR00395">
    <property type="entry name" value="RIBOSOMALS2"/>
</dbReference>
<dbReference type="SUPFAM" id="SSF52313">
    <property type="entry name" value="Ribosomal protein S2"/>
    <property type="match status" value="1"/>
</dbReference>
<dbReference type="PROSITE" id="PS00962">
    <property type="entry name" value="RIBOSOMAL_S2_1"/>
    <property type="match status" value="1"/>
</dbReference>
<dbReference type="PROSITE" id="PS00963">
    <property type="entry name" value="RIBOSOMAL_S2_2"/>
    <property type="match status" value="1"/>
</dbReference>
<protein>
    <recommendedName>
        <fullName evidence="1">Small ribosomal subunit protein uS2</fullName>
    </recommendedName>
    <alternativeName>
        <fullName evidence="3">30S ribosomal protein S2</fullName>
    </alternativeName>
</protein>
<evidence type="ECO:0000255" key="1">
    <source>
        <dbReference type="HAMAP-Rule" id="MF_00291"/>
    </source>
</evidence>
<evidence type="ECO:0000256" key="2">
    <source>
        <dbReference type="SAM" id="MobiDB-lite"/>
    </source>
</evidence>
<evidence type="ECO:0000305" key="3"/>
<name>RS2_TRIEI</name>